<protein>
    <recommendedName>
        <fullName>Holin-like protein CidB</fullName>
    </recommendedName>
</protein>
<reference key="1">
    <citation type="journal article" date="2001" name="Lancet">
        <title>Whole genome sequencing of meticillin-resistant Staphylococcus aureus.</title>
        <authorList>
            <person name="Kuroda M."/>
            <person name="Ohta T."/>
            <person name="Uchiyama I."/>
            <person name="Baba T."/>
            <person name="Yuzawa H."/>
            <person name="Kobayashi I."/>
            <person name="Cui L."/>
            <person name="Oguchi A."/>
            <person name="Aoki K."/>
            <person name="Nagai Y."/>
            <person name="Lian J.-Q."/>
            <person name="Ito T."/>
            <person name="Kanamori M."/>
            <person name="Matsumaru H."/>
            <person name="Maruyama A."/>
            <person name="Murakami H."/>
            <person name="Hosoyama A."/>
            <person name="Mizutani-Ui Y."/>
            <person name="Takahashi N.K."/>
            <person name="Sawano T."/>
            <person name="Inoue R."/>
            <person name="Kaito C."/>
            <person name="Sekimizu K."/>
            <person name="Hirakawa H."/>
            <person name="Kuhara S."/>
            <person name="Goto S."/>
            <person name="Yabuzaki J."/>
            <person name="Kanehisa M."/>
            <person name="Yamashita A."/>
            <person name="Oshima K."/>
            <person name="Furuya K."/>
            <person name="Yoshino C."/>
            <person name="Shiba T."/>
            <person name="Hattori M."/>
            <person name="Ogasawara N."/>
            <person name="Hayashi H."/>
            <person name="Hiramatsu K."/>
        </authorList>
    </citation>
    <scope>NUCLEOTIDE SEQUENCE [LARGE SCALE GENOMIC DNA]</scope>
    <source>
        <strain>N315</strain>
    </source>
</reference>
<proteinExistence type="inferred from homology"/>
<feature type="chain" id="PRO_0000217046" description="Holin-like protein CidB">
    <location>
        <begin position="1"/>
        <end position="229"/>
    </location>
</feature>
<feature type="transmembrane region" description="Helical" evidence="2">
    <location>
        <begin position="4"/>
        <end position="21"/>
    </location>
</feature>
<feature type="transmembrane region" description="Helical" evidence="2">
    <location>
        <begin position="30"/>
        <end position="52"/>
    </location>
</feature>
<feature type="transmembrane region" description="Helical" evidence="2">
    <location>
        <begin position="62"/>
        <end position="79"/>
    </location>
</feature>
<feature type="transmembrane region" description="Helical" evidence="2">
    <location>
        <begin position="90"/>
        <end position="112"/>
    </location>
</feature>
<feature type="transmembrane region" description="Helical" evidence="2">
    <location>
        <begin position="149"/>
        <end position="171"/>
    </location>
</feature>
<feature type="transmembrane region" description="Helical" evidence="2">
    <location>
        <begin position="204"/>
        <end position="226"/>
    </location>
</feature>
<evidence type="ECO:0000250" key="1"/>
<evidence type="ECO:0000255" key="2"/>
<evidence type="ECO:0000305" key="3"/>
<gene>
    <name type="primary">cidB</name>
    <name type="ordered locus">SA2328</name>
</gene>
<accession>P60638</accession>
<accession>Q99R95</accession>
<dbReference type="EMBL" id="BA000018">
    <property type="protein sequence ID" value="BAB43631.1"/>
    <property type="molecule type" value="Genomic_DNA"/>
</dbReference>
<dbReference type="PIR" id="E90058">
    <property type="entry name" value="E90058"/>
</dbReference>
<dbReference type="RefSeq" id="WP_001001019.1">
    <property type="nucleotide sequence ID" value="NC_002745.2"/>
</dbReference>
<dbReference type="EnsemblBacteria" id="BAB43631">
    <property type="protein sequence ID" value="BAB43631"/>
    <property type="gene ID" value="BAB43631"/>
</dbReference>
<dbReference type="KEGG" id="sau:SA2328"/>
<dbReference type="HOGENOM" id="CLU_082099_3_0_9"/>
<dbReference type="GO" id="GO:0005886">
    <property type="term" value="C:plasma membrane"/>
    <property type="evidence" value="ECO:0007669"/>
    <property type="project" value="UniProtKB-SubCell"/>
</dbReference>
<dbReference type="GO" id="GO:0031640">
    <property type="term" value="P:killing of cells of another organism"/>
    <property type="evidence" value="ECO:0007669"/>
    <property type="project" value="UniProtKB-KW"/>
</dbReference>
<dbReference type="InterPro" id="IPR007300">
    <property type="entry name" value="CidB/LrgB"/>
</dbReference>
<dbReference type="PANTHER" id="PTHR30249:SF17">
    <property type="entry name" value="HOLIN-LIKE PROTEIN CIDB"/>
    <property type="match status" value="1"/>
</dbReference>
<dbReference type="PANTHER" id="PTHR30249">
    <property type="entry name" value="PUTATIVE SEROTONIN TRANSPORTER"/>
    <property type="match status" value="1"/>
</dbReference>
<dbReference type="Pfam" id="PF04172">
    <property type="entry name" value="LrgB"/>
    <property type="match status" value="1"/>
</dbReference>
<sequence>MNDYVQALLMILLTVVLYYFAKRLQQKYPNPFLNPALIASLGIIFVLLIFGISYNGYMKGGSWINHILNATVVCLAYPLYKNREKIKDNVSIIFASVLTGVMLNFMLVFLTLKAFGYSKDVIVTLLPRSITAAVGIEVSHELGGTDTMTVLFIITTGLIGSILGSMLLRFGRFESSIAKGLTYGNASHAFGTAKALEMDIESGAFSSIGMILTAVISSVLIPVLILLFY</sequence>
<name>CIDB_STAAN</name>
<comment type="function">
    <text evidence="1">Increases the activity of extracellular murein hydrolases possibly by mediating their export via hole formation. Inhibited by the antiholin-like proteins LrgAB. In an unstressed cell, the LrgAB products probably inhibit the function of the CidAB proteins. When a cell is stressed by the addition of antibiotics or by other factors in the environment, the CidAB proteins possibly oligomerize within the bacterial cell membrane, creating lesions that disrupt the proton motive force, which in turn results in loss of cell viability. These lesions are also hypothesized to regulate the subsequent cell lysis by either allowing the murein hydrolases access to the cell wall substrate and/or regulating their activity by a possible change in the cell wall pH that results from loss of membrane potential (By similarity).</text>
</comment>
<comment type="subcellular location">
    <subcellularLocation>
        <location evidence="3">Cell membrane</location>
        <topology evidence="3">Multi-pass membrane protein</topology>
    </subcellularLocation>
</comment>
<comment type="similarity">
    <text evidence="3">Belongs to the CidB/LrgB family. CidB subfamily.</text>
</comment>
<keyword id="KW-1003">Cell membrane</keyword>
<keyword id="KW-0204">Cytolysis</keyword>
<keyword id="KW-0472">Membrane</keyword>
<keyword id="KW-0812">Transmembrane</keyword>
<keyword id="KW-1133">Transmembrane helix</keyword>
<organism>
    <name type="scientific">Staphylococcus aureus (strain N315)</name>
    <dbReference type="NCBI Taxonomy" id="158879"/>
    <lineage>
        <taxon>Bacteria</taxon>
        <taxon>Bacillati</taxon>
        <taxon>Bacillota</taxon>
        <taxon>Bacilli</taxon>
        <taxon>Bacillales</taxon>
        <taxon>Staphylococcaceae</taxon>
        <taxon>Staphylococcus</taxon>
    </lineage>
</organism>